<comment type="function">
    <text evidence="1">mRNA decapping enzyme that specifically removes the nicotinamide adenine dinucleotide (NAD) cap from a subset of mRNAs by hydrolyzing the diphosphate linkage to produce nicotinamide mononucleotide (NMN) and 5' monophosphate mRNA. The NAD-cap is present at the 5'-end of some mRNAs and stabilizes RNA against 5'-processing. Has preference for mRNAs with a 5'-end purine. Catalyzes the hydrolysis of a broad range of dinucleotide pyrophosphates.</text>
</comment>
<comment type="catalytic activity">
    <reaction evidence="1">
        <text>a 5'-end NAD(+)-phospho-ribonucleoside in mRNA + H2O = a 5'-end phospho-adenosine-phospho-ribonucleoside in mRNA + beta-nicotinamide D-ribonucleotide + 2 H(+)</text>
        <dbReference type="Rhea" id="RHEA:60876"/>
        <dbReference type="Rhea" id="RHEA-COMP:15698"/>
        <dbReference type="Rhea" id="RHEA-COMP:15719"/>
        <dbReference type="ChEBI" id="CHEBI:14649"/>
        <dbReference type="ChEBI" id="CHEBI:15377"/>
        <dbReference type="ChEBI" id="CHEBI:15378"/>
        <dbReference type="ChEBI" id="CHEBI:144029"/>
        <dbReference type="ChEBI" id="CHEBI:144051"/>
    </reaction>
    <physiologicalReaction direction="left-to-right" evidence="1">
        <dbReference type="Rhea" id="RHEA:60877"/>
    </physiologicalReaction>
</comment>
<comment type="catalytic activity">
    <reaction evidence="1">
        <text>NAD(+) + H2O = beta-nicotinamide D-ribonucleotide + AMP + 2 H(+)</text>
        <dbReference type="Rhea" id="RHEA:11800"/>
        <dbReference type="ChEBI" id="CHEBI:14649"/>
        <dbReference type="ChEBI" id="CHEBI:15377"/>
        <dbReference type="ChEBI" id="CHEBI:15378"/>
        <dbReference type="ChEBI" id="CHEBI:57540"/>
        <dbReference type="ChEBI" id="CHEBI:456215"/>
        <dbReference type="EC" id="3.6.1.22"/>
    </reaction>
</comment>
<comment type="catalytic activity">
    <reaction evidence="1">
        <text>NADH + H2O = reduced beta-nicotinamide D-ribonucleotide + AMP + 2 H(+)</text>
        <dbReference type="Rhea" id="RHEA:48868"/>
        <dbReference type="ChEBI" id="CHEBI:15377"/>
        <dbReference type="ChEBI" id="CHEBI:15378"/>
        <dbReference type="ChEBI" id="CHEBI:57945"/>
        <dbReference type="ChEBI" id="CHEBI:90832"/>
        <dbReference type="ChEBI" id="CHEBI:456215"/>
        <dbReference type="EC" id="3.6.1.22"/>
    </reaction>
</comment>
<comment type="cofactor">
    <cofactor evidence="1">
        <name>Mg(2+)</name>
        <dbReference type="ChEBI" id="CHEBI:18420"/>
    </cofactor>
    <cofactor evidence="1">
        <name>Mn(2+)</name>
        <dbReference type="ChEBI" id="CHEBI:29035"/>
    </cofactor>
    <text evidence="1">Divalent metal cations. Mg(2+) or Mn(2+).</text>
</comment>
<comment type="cofactor">
    <cofactor evidence="1">
        <name>Zn(2+)</name>
        <dbReference type="ChEBI" id="CHEBI:29105"/>
    </cofactor>
    <text evidence="1">Binds 1 zinc ion per subunit.</text>
</comment>
<comment type="subunit">
    <text evidence="1">Homodimer.</text>
</comment>
<comment type="similarity">
    <text evidence="1">Belongs to the Nudix hydrolase family. NudC subfamily.</text>
</comment>
<accession>B1IUQ1</accession>
<dbReference type="EC" id="3.6.1.-" evidence="1"/>
<dbReference type="EC" id="3.6.1.22" evidence="1"/>
<dbReference type="EMBL" id="CP000946">
    <property type="protein sequence ID" value="ACA79628.1"/>
    <property type="molecule type" value="Genomic_DNA"/>
</dbReference>
<dbReference type="RefSeq" id="WP_000373940.1">
    <property type="nucleotide sequence ID" value="NZ_MTFT01000025.1"/>
</dbReference>
<dbReference type="SMR" id="B1IUQ1"/>
<dbReference type="GeneID" id="93777898"/>
<dbReference type="KEGG" id="ecl:EcolC_4029"/>
<dbReference type="HOGENOM" id="CLU_037162_0_1_6"/>
<dbReference type="GO" id="GO:0005829">
    <property type="term" value="C:cytosol"/>
    <property type="evidence" value="ECO:0007669"/>
    <property type="project" value="TreeGrafter"/>
</dbReference>
<dbReference type="GO" id="GO:0000287">
    <property type="term" value="F:magnesium ion binding"/>
    <property type="evidence" value="ECO:0007669"/>
    <property type="project" value="UniProtKB-UniRule"/>
</dbReference>
<dbReference type="GO" id="GO:0030145">
    <property type="term" value="F:manganese ion binding"/>
    <property type="evidence" value="ECO:0007669"/>
    <property type="project" value="UniProtKB-UniRule"/>
</dbReference>
<dbReference type="GO" id="GO:0000210">
    <property type="term" value="F:NAD+ diphosphatase activity"/>
    <property type="evidence" value="ECO:0007669"/>
    <property type="project" value="UniProtKB-UniRule"/>
</dbReference>
<dbReference type="GO" id="GO:0035529">
    <property type="term" value="F:NADH pyrophosphatase activity"/>
    <property type="evidence" value="ECO:0007669"/>
    <property type="project" value="TreeGrafter"/>
</dbReference>
<dbReference type="GO" id="GO:0110153">
    <property type="term" value="F:RNA NAD-cap (NMN-forming) hydrolase activity"/>
    <property type="evidence" value="ECO:0007669"/>
    <property type="project" value="RHEA"/>
</dbReference>
<dbReference type="GO" id="GO:0008270">
    <property type="term" value="F:zinc ion binding"/>
    <property type="evidence" value="ECO:0007669"/>
    <property type="project" value="UniProtKB-UniRule"/>
</dbReference>
<dbReference type="GO" id="GO:0019677">
    <property type="term" value="P:NAD catabolic process"/>
    <property type="evidence" value="ECO:0007669"/>
    <property type="project" value="TreeGrafter"/>
</dbReference>
<dbReference type="GO" id="GO:0006734">
    <property type="term" value="P:NADH metabolic process"/>
    <property type="evidence" value="ECO:0007669"/>
    <property type="project" value="TreeGrafter"/>
</dbReference>
<dbReference type="GO" id="GO:0006742">
    <property type="term" value="P:NADP catabolic process"/>
    <property type="evidence" value="ECO:0007669"/>
    <property type="project" value="TreeGrafter"/>
</dbReference>
<dbReference type="CDD" id="cd03429">
    <property type="entry name" value="NUDIX_NADH_pyrophosphatase_Nudt13"/>
    <property type="match status" value="1"/>
</dbReference>
<dbReference type="FunFam" id="3.90.79.10:FF:000004">
    <property type="entry name" value="NADH pyrophosphatase"/>
    <property type="match status" value="1"/>
</dbReference>
<dbReference type="FunFam" id="3.90.79.20:FF:000001">
    <property type="entry name" value="NADH pyrophosphatase"/>
    <property type="match status" value="1"/>
</dbReference>
<dbReference type="Gene3D" id="3.90.79.20">
    <property type="match status" value="1"/>
</dbReference>
<dbReference type="Gene3D" id="3.90.79.10">
    <property type="entry name" value="Nucleoside Triphosphate Pyrophosphohydrolase"/>
    <property type="match status" value="1"/>
</dbReference>
<dbReference type="HAMAP" id="MF_00297">
    <property type="entry name" value="Nudix_NudC"/>
    <property type="match status" value="1"/>
</dbReference>
<dbReference type="InterPro" id="IPR050241">
    <property type="entry name" value="NAD-cap_RNA_hydrolase_NudC"/>
</dbReference>
<dbReference type="InterPro" id="IPR049734">
    <property type="entry name" value="NudC-like_C"/>
</dbReference>
<dbReference type="InterPro" id="IPR015797">
    <property type="entry name" value="NUDIX_hydrolase-like_dom_sf"/>
</dbReference>
<dbReference type="InterPro" id="IPR020084">
    <property type="entry name" value="NUDIX_hydrolase_CS"/>
</dbReference>
<dbReference type="InterPro" id="IPR000086">
    <property type="entry name" value="NUDIX_hydrolase_dom"/>
</dbReference>
<dbReference type="InterPro" id="IPR022925">
    <property type="entry name" value="RNA_Hydrolase_NudC"/>
</dbReference>
<dbReference type="InterPro" id="IPR015376">
    <property type="entry name" value="Znr_NADH_PPase"/>
</dbReference>
<dbReference type="NCBIfam" id="NF001299">
    <property type="entry name" value="PRK00241.1"/>
    <property type="match status" value="1"/>
</dbReference>
<dbReference type="PANTHER" id="PTHR42904:SF6">
    <property type="entry name" value="NAD-CAPPED RNA HYDROLASE NUDT12"/>
    <property type="match status" value="1"/>
</dbReference>
<dbReference type="PANTHER" id="PTHR42904">
    <property type="entry name" value="NUDIX HYDROLASE, NUDC SUBFAMILY"/>
    <property type="match status" value="1"/>
</dbReference>
<dbReference type="Pfam" id="PF00293">
    <property type="entry name" value="NUDIX"/>
    <property type="match status" value="1"/>
</dbReference>
<dbReference type="Pfam" id="PF09297">
    <property type="entry name" value="Zn_ribbon_NUD"/>
    <property type="match status" value="1"/>
</dbReference>
<dbReference type="SUPFAM" id="SSF55811">
    <property type="entry name" value="Nudix"/>
    <property type="match status" value="2"/>
</dbReference>
<dbReference type="PROSITE" id="PS51462">
    <property type="entry name" value="NUDIX"/>
    <property type="match status" value="1"/>
</dbReference>
<dbReference type="PROSITE" id="PS00893">
    <property type="entry name" value="NUDIX_BOX"/>
    <property type="match status" value="1"/>
</dbReference>
<organism>
    <name type="scientific">Escherichia coli (strain ATCC 8739 / DSM 1576 / NBRC 3972 / NCIMB 8545 / WDCM 00012 / Crooks)</name>
    <dbReference type="NCBI Taxonomy" id="481805"/>
    <lineage>
        <taxon>Bacteria</taxon>
        <taxon>Pseudomonadati</taxon>
        <taxon>Pseudomonadota</taxon>
        <taxon>Gammaproteobacteria</taxon>
        <taxon>Enterobacterales</taxon>
        <taxon>Enterobacteriaceae</taxon>
        <taxon>Escherichia</taxon>
    </lineage>
</organism>
<feature type="chain" id="PRO_1000078947" description="NAD-capped RNA hydrolase NudC">
    <location>
        <begin position="1"/>
        <end position="257"/>
    </location>
</feature>
<feature type="domain" description="Nudix hydrolase" evidence="1">
    <location>
        <begin position="125"/>
        <end position="248"/>
    </location>
</feature>
<feature type="short sequence motif" description="Nudix box" evidence="1">
    <location>
        <begin position="159"/>
        <end position="180"/>
    </location>
</feature>
<feature type="binding site" evidence="1">
    <location>
        <position position="25"/>
    </location>
    <ligand>
        <name>substrate</name>
    </ligand>
</feature>
<feature type="binding site" evidence="1">
    <location>
        <position position="69"/>
    </location>
    <ligand>
        <name>substrate</name>
    </ligand>
</feature>
<feature type="binding site" evidence="1">
    <location>
        <position position="98"/>
    </location>
    <ligand>
        <name>Zn(2+)</name>
        <dbReference type="ChEBI" id="CHEBI:29105"/>
    </ligand>
</feature>
<feature type="binding site" evidence="1">
    <location>
        <position position="101"/>
    </location>
    <ligand>
        <name>Zn(2+)</name>
        <dbReference type="ChEBI" id="CHEBI:29105"/>
    </ligand>
</feature>
<feature type="binding site" evidence="1">
    <location>
        <position position="111"/>
    </location>
    <ligand>
        <name>substrate</name>
    </ligand>
</feature>
<feature type="binding site" evidence="1">
    <location>
        <position position="116"/>
    </location>
    <ligand>
        <name>Zn(2+)</name>
        <dbReference type="ChEBI" id="CHEBI:29105"/>
    </ligand>
</feature>
<feature type="binding site" evidence="1">
    <location>
        <position position="119"/>
    </location>
    <ligand>
        <name>Zn(2+)</name>
        <dbReference type="ChEBI" id="CHEBI:29105"/>
    </ligand>
</feature>
<feature type="binding site" evidence="1">
    <location>
        <position position="124"/>
    </location>
    <ligand>
        <name>substrate</name>
    </ligand>
</feature>
<feature type="binding site" evidence="1">
    <location>
        <position position="158"/>
    </location>
    <ligand>
        <name>a divalent metal cation</name>
        <dbReference type="ChEBI" id="CHEBI:60240"/>
        <label>1</label>
    </ligand>
</feature>
<feature type="binding site" evidence="1">
    <location>
        <position position="174"/>
    </location>
    <ligand>
        <name>a divalent metal cation</name>
        <dbReference type="ChEBI" id="CHEBI:60240"/>
        <label>2</label>
    </ligand>
</feature>
<feature type="binding site" evidence="1">
    <location>
        <position position="174"/>
    </location>
    <ligand>
        <name>a divalent metal cation</name>
        <dbReference type="ChEBI" id="CHEBI:60240"/>
        <label>3</label>
    </ligand>
</feature>
<feature type="binding site" evidence="1">
    <location>
        <position position="178"/>
    </location>
    <ligand>
        <name>a divalent metal cation</name>
        <dbReference type="ChEBI" id="CHEBI:60240"/>
        <label>1</label>
    </ligand>
</feature>
<feature type="binding site" evidence="1">
    <location>
        <position position="178"/>
    </location>
    <ligand>
        <name>a divalent metal cation</name>
        <dbReference type="ChEBI" id="CHEBI:60240"/>
        <label>3</label>
    </ligand>
</feature>
<feature type="binding site" evidence="1">
    <location>
        <begin position="192"/>
        <end position="199"/>
    </location>
    <ligand>
        <name>substrate</name>
    </ligand>
</feature>
<feature type="binding site" evidence="1">
    <location>
        <position position="219"/>
    </location>
    <ligand>
        <name>a divalent metal cation</name>
        <dbReference type="ChEBI" id="CHEBI:60240"/>
        <label>1</label>
    </ligand>
</feature>
<feature type="binding site" evidence="1">
    <location>
        <position position="219"/>
    </location>
    <ligand>
        <name>a divalent metal cation</name>
        <dbReference type="ChEBI" id="CHEBI:60240"/>
        <label>3</label>
    </ligand>
</feature>
<feature type="binding site" evidence="1">
    <location>
        <position position="241"/>
    </location>
    <ligand>
        <name>substrate</name>
    </ligand>
</feature>
<reference key="1">
    <citation type="submission" date="2008-02" db="EMBL/GenBank/DDBJ databases">
        <title>Complete sequence of Escherichia coli C str. ATCC 8739.</title>
        <authorList>
            <person name="Copeland A."/>
            <person name="Lucas S."/>
            <person name="Lapidus A."/>
            <person name="Glavina del Rio T."/>
            <person name="Dalin E."/>
            <person name="Tice H."/>
            <person name="Bruce D."/>
            <person name="Goodwin L."/>
            <person name="Pitluck S."/>
            <person name="Kiss H."/>
            <person name="Brettin T."/>
            <person name="Detter J.C."/>
            <person name="Han C."/>
            <person name="Kuske C.R."/>
            <person name="Schmutz J."/>
            <person name="Larimer F."/>
            <person name="Land M."/>
            <person name="Hauser L."/>
            <person name="Kyrpides N."/>
            <person name="Mikhailova N."/>
            <person name="Ingram L."/>
            <person name="Richardson P."/>
        </authorList>
    </citation>
    <scope>NUCLEOTIDE SEQUENCE [LARGE SCALE GENOMIC DNA]</scope>
    <source>
        <strain>ATCC 8739 / DSM 1576 / NBRC 3972 / NCIMB 8545 / WDCM 00012 / Crooks</strain>
    </source>
</reference>
<gene>
    <name evidence="1" type="primary">nudC</name>
    <name type="ordered locus">EcolC_4029</name>
</gene>
<keyword id="KW-0378">Hydrolase</keyword>
<keyword id="KW-0460">Magnesium</keyword>
<keyword id="KW-0464">Manganese</keyword>
<keyword id="KW-0479">Metal-binding</keyword>
<keyword id="KW-0520">NAD</keyword>
<keyword id="KW-0862">Zinc</keyword>
<evidence type="ECO:0000255" key="1">
    <source>
        <dbReference type="HAMAP-Rule" id="MF_00297"/>
    </source>
</evidence>
<name>NUDC_ECOLC</name>
<proteinExistence type="inferred from homology"/>
<sequence>MDRIIEKLDHGWWVVSHEQKLWLPKGELPYGEAANFDLVGQRALQIGEWQGEPVWLVQQQRRHDMGSVRQVIDLDVGLFQLAGRGVQLAEFYRSHKYCGYCGHEMYPSKTEWAMLCSHCRERYYPQIAPCIIVAIRRDDSILLAQHTRHRNGVHTVLAGFVEVGETLEQAVAREVMEESGIKVKNLRYVTSQPWPFPQSLMTAFMAEYDSGDIVIDPKELLEANWYRYDDLPLLPPPGTVARRLIEDTVAMCRAEYE</sequence>
<protein>
    <recommendedName>
        <fullName evidence="1">NAD-capped RNA hydrolase NudC</fullName>
        <shortName evidence="1">DeNADding enzyme NudC</shortName>
        <ecNumber evidence="1">3.6.1.-</ecNumber>
    </recommendedName>
    <alternativeName>
        <fullName evidence="1">NADH pyrophosphatase</fullName>
        <ecNumber evidence="1">3.6.1.22</ecNumber>
    </alternativeName>
</protein>